<sequence length="324" mass="34904">MAFAKISQVAHYVPEQVVTNHDLAQIMDTNDEWISSRTGIRQRHISRTESTSDLATEVAKKLMAKAGITGEELDFIILATITPDSMMPSTAARVQANIGANKAFAFDLTAACSGFVFALSTAEKFIASGRFQKGLVIGSETLSKAVDWSDRSTAVLFGDGAGGVLLEASEQEHFLAESLNSDGSRSECLTYGHSGLHSPFSDQESADSFLKMDGRTVFDFAIRDVAKSIKQTIDESPIEVTDLDYLLLHQANDRILDKMARKIGVDRAKLPANMMEYGNTSAASIPILLSECVEQGLIPLDGSQTVLLSGFGGGLTWGTLILTI</sequence>
<comment type="function">
    <text evidence="1">Catalyzes the condensation reaction of fatty acid synthesis by the addition to an acyl acceptor of two carbons from malonyl-ACP. Catalyzes the first condensation reaction which initiates fatty acid synthesis and may therefore play a role in governing the total rate of fatty acid production. Possesses both acetoacetyl-ACP synthase and acetyl transacylase activities. Its substrate specificity determines the biosynthesis of branched-chain and/or straight-chain of fatty acids.</text>
</comment>
<comment type="catalytic activity">
    <reaction evidence="1">
        <text>malonyl-[ACP] + acetyl-CoA + H(+) = 3-oxobutanoyl-[ACP] + CO2 + CoA</text>
        <dbReference type="Rhea" id="RHEA:12080"/>
        <dbReference type="Rhea" id="RHEA-COMP:9623"/>
        <dbReference type="Rhea" id="RHEA-COMP:9625"/>
        <dbReference type="ChEBI" id="CHEBI:15378"/>
        <dbReference type="ChEBI" id="CHEBI:16526"/>
        <dbReference type="ChEBI" id="CHEBI:57287"/>
        <dbReference type="ChEBI" id="CHEBI:57288"/>
        <dbReference type="ChEBI" id="CHEBI:78449"/>
        <dbReference type="ChEBI" id="CHEBI:78450"/>
        <dbReference type="EC" id="2.3.1.180"/>
    </reaction>
</comment>
<comment type="pathway">
    <text evidence="1">Lipid metabolism; fatty acid biosynthesis.</text>
</comment>
<comment type="subunit">
    <text evidence="1">Homodimer.</text>
</comment>
<comment type="subcellular location">
    <subcellularLocation>
        <location evidence="1">Cytoplasm</location>
    </subcellularLocation>
</comment>
<comment type="domain">
    <text evidence="1">The last Arg residue of the ACP-binding site is essential for the weak association between ACP/AcpP and FabH.</text>
</comment>
<comment type="similarity">
    <text evidence="1">Belongs to the thiolase-like superfamily. FabH family.</text>
</comment>
<gene>
    <name evidence="1" type="primary">fabH</name>
    <name type="ordered locus">SPCG_0415</name>
</gene>
<reference key="1">
    <citation type="journal article" date="2009" name="BMC Genomics">
        <title>Genome evolution driven by host adaptations results in a more virulent and antimicrobial-resistant Streptococcus pneumoniae serotype 14.</title>
        <authorList>
            <person name="Ding F."/>
            <person name="Tang P."/>
            <person name="Hsu M.-H."/>
            <person name="Cui P."/>
            <person name="Hu S."/>
            <person name="Yu J."/>
            <person name="Chiu C.-H."/>
        </authorList>
    </citation>
    <scope>NUCLEOTIDE SEQUENCE [LARGE SCALE GENOMIC DNA]</scope>
    <source>
        <strain>CGSP14</strain>
    </source>
</reference>
<feature type="chain" id="PRO_1000216000" description="Beta-ketoacyl-[acyl-carrier-protein] synthase III">
    <location>
        <begin position="1"/>
        <end position="324"/>
    </location>
</feature>
<feature type="region of interest" description="ACP-binding" evidence="1">
    <location>
        <begin position="250"/>
        <end position="254"/>
    </location>
</feature>
<feature type="active site" evidence="1">
    <location>
        <position position="112"/>
    </location>
</feature>
<feature type="active site" evidence="1">
    <location>
        <position position="249"/>
    </location>
</feature>
<feature type="active site" evidence="1">
    <location>
        <position position="279"/>
    </location>
</feature>
<keyword id="KW-0012">Acyltransferase</keyword>
<keyword id="KW-0963">Cytoplasm</keyword>
<keyword id="KW-0275">Fatty acid biosynthesis</keyword>
<keyword id="KW-0276">Fatty acid metabolism</keyword>
<keyword id="KW-0444">Lipid biosynthesis</keyword>
<keyword id="KW-0443">Lipid metabolism</keyword>
<keyword id="KW-0511">Multifunctional enzyme</keyword>
<keyword id="KW-0808">Transferase</keyword>
<proteinExistence type="inferred from homology"/>
<dbReference type="EC" id="2.3.1.180" evidence="1"/>
<dbReference type="EMBL" id="CP001033">
    <property type="protein sequence ID" value="ACB89667.1"/>
    <property type="molecule type" value="Genomic_DNA"/>
</dbReference>
<dbReference type="RefSeq" id="WP_000852948.1">
    <property type="nucleotide sequence ID" value="NC_010582.1"/>
</dbReference>
<dbReference type="SMR" id="B2ILW2"/>
<dbReference type="KEGG" id="spw:SPCG_0415"/>
<dbReference type="HOGENOM" id="CLU_039592_4_1_9"/>
<dbReference type="UniPathway" id="UPA00094"/>
<dbReference type="GO" id="GO:0005737">
    <property type="term" value="C:cytoplasm"/>
    <property type="evidence" value="ECO:0007669"/>
    <property type="project" value="UniProtKB-SubCell"/>
</dbReference>
<dbReference type="GO" id="GO:0004315">
    <property type="term" value="F:3-oxoacyl-[acyl-carrier-protein] synthase activity"/>
    <property type="evidence" value="ECO:0007669"/>
    <property type="project" value="InterPro"/>
</dbReference>
<dbReference type="GO" id="GO:0033818">
    <property type="term" value="F:beta-ketoacyl-acyl-carrier-protein synthase III activity"/>
    <property type="evidence" value="ECO:0007669"/>
    <property type="project" value="UniProtKB-UniRule"/>
</dbReference>
<dbReference type="GO" id="GO:0006633">
    <property type="term" value="P:fatty acid biosynthetic process"/>
    <property type="evidence" value="ECO:0007669"/>
    <property type="project" value="UniProtKB-UniRule"/>
</dbReference>
<dbReference type="CDD" id="cd00830">
    <property type="entry name" value="KAS_III"/>
    <property type="match status" value="1"/>
</dbReference>
<dbReference type="Gene3D" id="3.40.47.10">
    <property type="match status" value="1"/>
</dbReference>
<dbReference type="HAMAP" id="MF_01815">
    <property type="entry name" value="FabH"/>
    <property type="match status" value="1"/>
</dbReference>
<dbReference type="InterPro" id="IPR013747">
    <property type="entry name" value="ACP_syn_III_C"/>
</dbReference>
<dbReference type="InterPro" id="IPR013751">
    <property type="entry name" value="ACP_syn_III_N"/>
</dbReference>
<dbReference type="InterPro" id="IPR004655">
    <property type="entry name" value="FabH"/>
</dbReference>
<dbReference type="InterPro" id="IPR016039">
    <property type="entry name" value="Thiolase-like"/>
</dbReference>
<dbReference type="NCBIfam" id="TIGR00747">
    <property type="entry name" value="fabH"/>
    <property type="match status" value="1"/>
</dbReference>
<dbReference type="NCBIfam" id="NF006829">
    <property type="entry name" value="PRK09352.1"/>
    <property type="match status" value="1"/>
</dbReference>
<dbReference type="PANTHER" id="PTHR43091">
    <property type="entry name" value="3-OXOACYL-[ACYL-CARRIER-PROTEIN] SYNTHASE"/>
    <property type="match status" value="1"/>
</dbReference>
<dbReference type="PANTHER" id="PTHR43091:SF1">
    <property type="entry name" value="BETA-KETOACYL-[ACYL-CARRIER-PROTEIN] SYNTHASE III, CHLOROPLASTIC"/>
    <property type="match status" value="1"/>
</dbReference>
<dbReference type="Pfam" id="PF08545">
    <property type="entry name" value="ACP_syn_III"/>
    <property type="match status" value="1"/>
</dbReference>
<dbReference type="Pfam" id="PF08541">
    <property type="entry name" value="ACP_syn_III_C"/>
    <property type="match status" value="1"/>
</dbReference>
<dbReference type="SUPFAM" id="SSF53901">
    <property type="entry name" value="Thiolase-like"/>
    <property type="match status" value="1"/>
</dbReference>
<name>FABH_STRPS</name>
<protein>
    <recommendedName>
        <fullName evidence="1">Beta-ketoacyl-[acyl-carrier-protein] synthase III</fullName>
        <shortName evidence="1">Beta-ketoacyl-ACP synthase III</shortName>
        <shortName evidence="1">KAS III</shortName>
        <ecNumber evidence="1">2.3.1.180</ecNumber>
    </recommendedName>
    <alternativeName>
        <fullName evidence="1">3-oxoacyl-[acyl-carrier-protein] synthase 3</fullName>
    </alternativeName>
    <alternativeName>
        <fullName evidence="1">3-oxoacyl-[acyl-carrier-protein] synthase III</fullName>
    </alternativeName>
</protein>
<organism>
    <name type="scientific">Streptococcus pneumoniae (strain CGSP14)</name>
    <dbReference type="NCBI Taxonomy" id="516950"/>
    <lineage>
        <taxon>Bacteria</taxon>
        <taxon>Bacillati</taxon>
        <taxon>Bacillota</taxon>
        <taxon>Bacilli</taxon>
        <taxon>Lactobacillales</taxon>
        <taxon>Streptococcaceae</taxon>
        <taxon>Streptococcus</taxon>
    </lineage>
</organism>
<accession>B2ILW2</accession>
<evidence type="ECO:0000255" key="1">
    <source>
        <dbReference type="HAMAP-Rule" id="MF_01815"/>
    </source>
</evidence>